<dbReference type="EC" id="3.5.4.2" evidence="1"/>
<dbReference type="EMBL" id="CP000800">
    <property type="protein sequence ID" value="ABV20575.1"/>
    <property type="molecule type" value="Genomic_DNA"/>
</dbReference>
<dbReference type="RefSeq" id="WP_001065701.1">
    <property type="nucleotide sequence ID" value="NC_009801.1"/>
</dbReference>
<dbReference type="SMR" id="A7ZTM0"/>
<dbReference type="KEGG" id="ecw:EcE24377A_4173"/>
<dbReference type="HOGENOM" id="CLU_027935_0_0_6"/>
<dbReference type="Proteomes" id="UP000001122">
    <property type="component" value="Chromosome"/>
</dbReference>
<dbReference type="GO" id="GO:0000034">
    <property type="term" value="F:adenine deaminase activity"/>
    <property type="evidence" value="ECO:0007669"/>
    <property type="project" value="UniProtKB-UniRule"/>
</dbReference>
<dbReference type="GO" id="GO:0006146">
    <property type="term" value="P:adenine catabolic process"/>
    <property type="evidence" value="ECO:0007669"/>
    <property type="project" value="InterPro"/>
</dbReference>
<dbReference type="CDD" id="cd01295">
    <property type="entry name" value="AdeC"/>
    <property type="match status" value="1"/>
</dbReference>
<dbReference type="FunFam" id="3.20.20.140:FF:000016">
    <property type="entry name" value="Adenine deaminase"/>
    <property type="match status" value="1"/>
</dbReference>
<dbReference type="Gene3D" id="3.20.20.140">
    <property type="entry name" value="Metal-dependent hydrolases"/>
    <property type="match status" value="1"/>
</dbReference>
<dbReference type="Gene3D" id="2.30.40.10">
    <property type="entry name" value="Urease, subunit C, domain 1"/>
    <property type="match status" value="1"/>
</dbReference>
<dbReference type="HAMAP" id="MF_01518">
    <property type="entry name" value="Adenine_deamin"/>
    <property type="match status" value="1"/>
</dbReference>
<dbReference type="InterPro" id="IPR006679">
    <property type="entry name" value="Adenine_deam"/>
</dbReference>
<dbReference type="InterPro" id="IPR026912">
    <property type="entry name" value="Adenine_deam_C"/>
</dbReference>
<dbReference type="InterPro" id="IPR006680">
    <property type="entry name" value="Amidohydro-rel"/>
</dbReference>
<dbReference type="InterPro" id="IPR011059">
    <property type="entry name" value="Metal-dep_hydrolase_composite"/>
</dbReference>
<dbReference type="InterPro" id="IPR032466">
    <property type="entry name" value="Metal_Hydrolase"/>
</dbReference>
<dbReference type="NCBIfam" id="TIGR01178">
    <property type="entry name" value="ade"/>
    <property type="match status" value="1"/>
</dbReference>
<dbReference type="NCBIfam" id="NF007457">
    <property type="entry name" value="PRK10027.1"/>
    <property type="match status" value="1"/>
</dbReference>
<dbReference type="PANTHER" id="PTHR11113:SF2">
    <property type="entry name" value="ADENINE DEAMINASE"/>
    <property type="match status" value="1"/>
</dbReference>
<dbReference type="PANTHER" id="PTHR11113">
    <property type="entry name" value="N-ACETYLGLUCOSAMINE-6-PHOSPHATE DEACETYLASE"/>
    <property type="match status" value="1"/>
</dbReference>
<dbReference type="Pfam" id="PF13382">
    <property type="entry name" value="Adenine_deam_C"/>
    <property type="match status" value="1"/>
</dbReference>
<dbReference type="Pfam" id="PF01979">
    <property type="entry name" value="Amidohydro_1"/>
    <property type="match status" value="1"/>
</dbReference>
<dbReference type="SUPFAM" id="SSF51338">
    <property type="entry name" value="Composite domain of metallo-dependent hydrolases"/>
    <property type="match status" value="1"/>
</dbReference>
<dbReference type="SUPFAM" id="SSF51556">
    <property type="entry name" value="Metallo-dependent hydrolases"/>
    <property type="match status" value="1"/>
</dbReference>
<reference key="1">
    <citation type="journal article" date="2008" name="J. Bacteriol.">
        <title>The pangenome structure of Escherichia coli: comparative genomic analysis of E. coli commensal and pathogenic isolates.</title>
        <authorList>
            <person name="Rasko D.A."/>
            <person name="Rosovitz M.J."/>
            <person name="Myers G.S.A."/>
            <person name="Mongodin E.F."/>
            <person name="Fricke W.F."/>
            <person name="Gajer P."/>
            <person name="Crabtree J."/>
            <person name="Sebaihia M."/>
            <person name="Thomson N.R."/>
            <person name="Chaudhuri R."/>
            <person name="Henderson I.R."/>
            <person name="Sperandio V."/>
            <person name="Ravel J."/>
        </authorList>
    </citation>
    <scope>NUCLEOTIDE SEQUENCE [LARGE SCALE GENOMIC DNA]</scope>
    <source>
        <strain>E24377A / ETEC</strain>
    </source>
</reference>
<protein>
    <recommendedName>
        <fullName evidence="1">Adenine deaminase</fullName>
        <shortName evidence="1">Adenase</shortName>
        <shortName evidence="1">Adenine aminase</shortName>
        <ecNumber evidence="1">3.5.4.2</ecNumber>
    </recommendedName>
</protein>
<name>ADEC_ECO24</name>
<gene>
    <name evidence="1" type="primary">ade</name>
    <name type="ordered locus">EcE24377A_4173</name>
</gene>
<feature type="chain" id="PRO_1000068609" description="Adenine deaminase">
    <location>
        <begin position="1"/>
        <end position="588"/>
    </location>
</feature>
<accession>A7ZTM0</accession>
<proteinExistence type="inferred from homology"/>
<comment type="catalytic activity">
    <reaction evidence="1">
        <text>adenine + H2O + H(+) = hypoxanthine + NH4(+)</text>
        <dbReference type="Rhea" id="RHEA:23688"/>
        <dbReference type="ChEBI" id="CHEBI:15377"/>
        <dbReference type="ChEBI" id="CHEBI:15378"/>
        <dbReference type="ChEBI" id="CHEBI:16708"/>
        <dbReference type="ChEBI" id="CHEBI:17368"/>
        <dbReference type="ChEBI" id="CHEBI:28938"/>
        <dbReference type="EC" id="3.5.4.2"/>
    </reaction>
</comment>
<comment type="cofactor">
    <cofactor evidence="1">
        <name>Mn(2+)</name>
        <dbReference type="ChEBI" id="CHEBI:29035"/>
    </cofactor>
</comment>
<comment type="subunit">
    <text evidence="1">Homodimer.</text>
</comment>
<comment type="similarity">
    <text evidence="1">Belongs to the metallo-dependent hydrolases superfamily. Adenine deaminase family.</text>
</comment>
<organism>
    <name type="scientific">Escherichia coli O139:H28 (strain E24377A / ETEC)</name>
    <dbReference type="NCBI Taxonomy" id="331111"/>
    <lineage>
        <taxon>Bacteria</taxon>
        <taxon>Pseudomonadati</taxon>
        <taxon>Pseudomonadota</taxon>
        <taxon>Gammaproteobacteria</taxon>
        <taxon>Enterobacterales</taxon>
        <taxon>Enterobacteriaceae</taxon>
        <taxon>Escherichia</taxon>
    </lineage>
</organism>
<keyword id="KW-0378">Hydrolase</keyword>
<keyword id="KW-0464">Manganese</keyword>
<keyword id="KW-1185">Reference proteome</keyword>
<sequence>MNNSINHKFHHISRAEYQELLAVSRGDAVADYIIDNVSILDLINGGEISGPIVIKGRYIAGVGAEYADAPALQRIDARGATAVPGFIDAHLHIESSMMTPVTFETATLPRGLTTVICDPHEIVNVMGEAGFAWFARCAEQARQNQYLQVSSCVPALEGCDVNGASFTLEQMLAWRDHPQVTGLAEMMDYSGVISGQNALLDKLDAFRHLTLDGHCPGLGGKELNAYITAGIENCHESYQLEEGRRKLQLGMSLMIREGSAARNLNALAPLINEFNSPQCMLCTDDRNPWEIAHEGHIDALIRRLIEQHNVPLHVAYRVASWSTARHFGLNHLGLLAPGKQADIVLLSDARKVTVQQVLVKGEPIDAQTLQAEESARLAQSAPPYGNTIARQPVSASDFALQFTPGKRYRVIDVIHNELITHSHSSVYSENGFDRDDVSFIAVLERYGQRLAPACGLLGGFGLNEGALAATVSHDSHNIVVIGRSAEEMALAVNQVIQDGGGLCVVRNGQVQSHLPLPIAGLMSTDTAQLLAEQIDALKAAARECGPLPDEPFIQMAFLSLPVIPALKLTSQGLFDGEKFAFTTLEVTE</sequence>
<evidence type="ECO:0000255" key="1">
    <source>
        <dbReference type="HAMAP-Rule" id="MF_01518"/>
    </source>
</evidence>